<dbReference type="EMBL" id="CP000438">
    <property type="protein sequence ID" value="ABJ14955.1"/>
    <property type="molecule type" value="Genomic_DNA"/>
</dbReference>
<dbReference type="RefSeq" id="WP_003097255.1">
    <property type="nucleotide sequence ID" value="NZ_CP034244.1"/>
</dbReference>
<dbReference type="SMR" id="Q02DE0"/>
<dbReference type="KEGG" id="pau:PA14_73410"/>
<dbReference type="PseudoCAP" id="PA14_73410"/>
<dbReference type="HOGENOM" id="CLU_016535_3_0_6"/>
<dbReference type="BioCyc" id="PAER208963:G1G74-6177-MONOMER"/>
<dbReference type="Proteomes" id="UP000000653">
    <property type="component" value="Chromosome"/>
</dbReference>
<dbReference type="GO" id="GO:0005886">
    <property type="term" value="C:plasma membrane"/>
    <property type="evidence" value="ECO:0007669"/>
    <property type="project" value="UniProtKB-SubCell"/>
</dbReference>
<dbReference type="GO" id="GO:0032977">
    <property type="term" value="F:membrane insertase activity"/>
    <property type="evidence" value="ECO:0007669"/>
    <property type="project" value="InterPro"/>
</dbReference>
<dbReference type="GO" id="GO:0051205">
    <property type="term" value="P:protein insertion into membrane"/>
    <property type="evidence" value="ECO:0007669"/>
    <property type="project" value="TreeGrafter"/>
</dbReference>
<dbReference type="GO" id="GO:0015031">
    <property type="term" value="P:protein transport"/>
    <property type="evidence" value="ECO:0007669"/>
    <property type="project" value="UniProtKB-KW"/>
</dbReference>
<dbReference type="CDD" id="cd20070">
    <property type="entry name" value="5TM_YidC_Alb3"/>
    <property type="match status" value="1"/>
</dbReference>
<dbReference type="CDD" id="cd19961">
    <property type="entry name" value="EcYidC-like_peri"/>
    <property type="match status" value="1"/>
</dbReference>
<dbReference type="FunFam" id="2.70.98.90:FF:000005">
    <property type="entry name" value="Membrane protein insertase YidC"/>
    <property type="match status" value="1"/>
</dbReference>
<dbReference type="Gene3D" id="2.70.98.90">
    <property type="match status" value="1"/>
</dbReference>
<dbReference type="HAMAP" id="MF_01810">
    <property type="entry name" value="YidC_type1"/>
    <property type="match status" value="1"/>
</dbReference>
<dbReference type="InterPro" id="IPR019998">
    <property type="entry name" value="Membr_insert_YidC"/>
</dbReference>
<dbReference type="InterPro" id="IPR028053">
    <property type="entry name" value="Membr_insert_YidC_N"/>
</dbReference>
<dbReference type="InterPro" id="IPR001708">
    <property type="entry name" value="YidC/ALB3/OXA1/COX18"/>
</dbReference>
<dbReference type="InterPro" id="IPR028055">
    <property type="entry name" value="YidC/Oxa/ALB_C"/>
</dbReference>
<dbReference type="InterPro" id="IPR047196">
    <property type="entry name" value="YidC_ALB_C"/>
</dbReference>
<dbReference type="InterPro" id="IPR038221">
    <property type="entry name" value="YidC_periplasmic_sf"/>
</dbReference>
<dbReference type="NCBIfam" id="NF002352">
    <property type="entry name" value="PRK01318.1-3"/>
    <property type="match status" value="1"/>
</dbReference>
<dbReference type="NCBIfam" id="TIGR03593">
    <property type="entry name" value="yidC_nterm"/>
    <property type="match status" value="2"/>
</dbReference>
<dbReference type="NCBIfam" id="TIGR03592">
    <property type="entry name" value="yidC_oxa1_cterm"/>
    <property type="match status" value="1"/>
</dbReference>
<dbReference type="PANTHER" id="PTHR12428:SF65">
    <property type="entry name" value="CYTOCHROME C OXIDASE ASSEMBLY PROTEIN COX18, MITOCHONDRIAL"/>
    <property type="match status" value="1"/>
</dbReference>
<dbReference type="PANTHER" id="PTHR12428">
    <property type="entry name" value="OXA1"/>
    <property type="match status" value="1"/>
</dbReference>
<dbReference type="Pfam" id="PF02096">
    <property type="entry name" value="60KD_IMP"/>
    <property type="match status" value="1"/>
</dbReference>
<dbReference type="Pfam" id="PF14849">
    <property type="entry name" value="YidC_periplas"/>
    <property type="match status" value="2"/>
</dbReference>
<dbReference type="PRINTS" id="PR00701">
    <property type="entry name" value="60KDINNERMP"/>
</dbReference>
<dbReference type="PRINTS" id="PR01900">
    <property type="entry name" value="YIDCPROTEIN"/>
</dbReference>
<sequence>MDIQRSILIVALAVVSYLLVLQWNKDYGQPELPAASASMNTTQGLPDTPSASGTSSDVPTAQSSAAGSEAADKPVAVSDKLIQVKTDVLDLAIDPRGGDIVQLGLLQYPRRLDRPDVPFPLFDNGRERTYLAQSGLTGADGPDASSAGRPLFHSAQSSYQLADGQNELVVDLSFSHDGVNYIKRFTFHRGLKADCSDKEKAQKKIECINENAYQVGVSYLIDNQSGKTWSGNLFAQLKRDGSADPSSTTATGVSTYLGAAVWTPDSPYKKISTKDMDKEQFKESVQGGWVAWLQHYFVTAWVPTKGEQHQVMTRKDGQGNYIVGFTGPTLSVPAGSKVETDLTLYAGPKLQKHLKELSPGLELTVDYGFLWFIAQPIFWLLQHIHSLIGNWGWSIIALTVLIKLAFFPLSAASYRSMARMRAVSPKMQAIKEQHGDDRQKMSQAMMELYKKEKINPLGGCLPILVQMPVFLSLYWVLLESVEMRQAPWLGWITDLSVKDPFFILPIVMGGTMLIQQMLNPTPPDPMQAKVMKLMPIIFTFFFLWFPAGLVLYWVVNNCLSIAQQWYITRKIEAAAKTA</sequence>
<feature type="chain" id="PRO_1000070138" description="Membrane protein insertase YidC">
    <location>
        <begin position="1"/>
        <end position="578"/>
    </location>
</feature>
<feature type="transmembrane region" description="Helical" evidence="1">
    <location>
        <begin position="3"/>
        <end position="23"/>
    </location>
</feature>
<feature type="transmembrane region" description="Helical" evidence="1">
    <location>
        <begin position="361"/>
        <end position="381"/>
    </location>
</feature>
<feature type="transmembrane region" description="Helical" evidence="1">
    <location>
        <begin position="387"/>
        <end position="407"/>
    </location>
</feature>
<feature type="transmembrane region" description="Helical" evidence="1">
    <location>
        <begin position="457"/>
        <end position="477"/>
    </location>
</feature>
<feature type="transmembrane region" description="Helical" evidence="1">
    <location>
        <begin position="500"/>
        <end position="520"/>
    </location>
</feature>
<feature type="transmembrane region" description="Helical" evidence="1">
    <location>
        <begin position="535"/>
        <end position="555"/>
    </location>
</feature>
<feature type="region of interest" description="Disordered" evidence="2">
    <location>
        <begin position="34"/>
        <end position="72"/>
    </location>
</feature>
<feature type="compositionally biased region" description="Polar residues" evidence="2">
    <location>
        <begin position="37"/>
        <end position="66"/>
    </location>
</feature>
<organism>
    <name type="scientific">Pseudomonas aeruginosa (strain UCBPP-PA14)</name>
    <dbReference type="NCBI Taxonomy" id="208963"/>
    <lineage>
        <taxon>Bacteria</taxon>
        <taxon>Pseudomonadati</taxon>
        <taxon>Pseudomonadota</taxon>
        <taxon>Gammaproteobacteria</taxon>
        <taxon>Pseudomonadales</taxon>
        <taxon>Pseudomonadaceae</taxon>
        <taxon>Pseudomonas</taxon>
    </lineage>
</organism>
<protein>
    <recommendedName>
        <fullName evidence="1">Membrane protein insertase YidC</fullName>
    </recommendedName>
    <alternativeName>
        <fullName evidence="1">Foldase YidC</fullName>
    </alternativeName>
    <alternativeName>
        <fullName evidence="1">Membrane integrase YidC</fullName>
    </alternativeName>
    <alternativeName>
        <fullName evidence="1">Membrane protein YidC</fullName>
    </alternativeName>
</protein>
<proteinExistence type="inferred from homology"/>
<comment type="function">
    <text evidence="1">Required for the insertion and/or proper folding and/or complex formation of integral membrane proteins into the membrane. Involved in integration of membrane proteins that insert both dependently and independently of the Sec translocase complex, as well as at least some lipoproteins. Aids folding of multispanning membrane proteins.</text>
</comment>
<comment type="subunit">
    <text evidence="1">Interacts with the Sec translocase complex via SecD. Specifically interacts with transmembrane segments of nascent integral membrane proteins during membrane integration.</text>
</comment>
<comment type="subcellular location">
    <subcellularLocation>
        <location evidence="1">Cell inner membrane</location>
        <topology evidence="1">Multi-pass membrane protein</topology>
    </subcellularLocation>
</comment>
<comment type="similarity">
    <text evidence="1">Belongs to the OXA1/ALB3/YidC family. Type 1 subfamily.</text>
</comment>
<accession>Q02DE0</accession>
<keyword id="KW-0997">Cell inner membrane</keyword>
<keyword id="KW-1003">Cell membrane</keyword>
<keyword id="KW-0143">Chaperone</keyword>
<keyword id="KW-0472">Membrane</keyword>
<keyword id="KW-0653">Protein transport</keyword>
<keyword id="KW-0812">Transmembrane</keyword>
<keyword id="KW-1133">Transmembrane helix</keyword>
<keyword id="KW-0813">Transport</keyword>
<gene>
    <name evidence="1" type="primary">yidC</name>
    <name type="ordered locus">PA14_73410</name>
</gene>
<reference key="1">
    <citation type="journal article" date="2006" name="Genome Biol.">
        <title>Genomic analysis reveals that Pseudomonas aeruginosa virulence is combinatorial.</title>
        <authorList>
            <person name="Lee D.G."/>
            <person name="Urbach J.M."/>
            <person name="Wu G."/>
            <person name="Liberati N.T."/>
            <person name="Feinbaum R.L."/>
            <person name="Miyata S."/>
            <person name="Diggins L.T."/>
            <person name="He J."/>
            <person name="Saucier M."/>
            <person name="Deziel E."/>
            <person name="Friedman L."/>
            <person name="Li L."/>
            <person name="Grills G."/>
            <person name="Montgomery K."/>
            <person name="Kucherlapati R."/>
            <person name="Rahme L.G."/>
            <person name="Ausubel F.M."/>
        </authorList>
    </citation>
    <scope>NUCLEOTIDE SEQUENCE [LARGE SCALE GENOMIC DNA]</scope>
    <source>
        <strain>UCBPP-PA14</strain>
    </source>
</reference>
<evidence type="ECO:0000255" key="1">
    <source>
        <dbReference type="HAMAP-Rule" id="MF_01810"/>
    </source>
</evidence>
<evidence type="ECO:0000256" key="2">
    <source>
        <dbReference type="SAM" id="MobiDB-lite"/>
    </source>
</evidence>
<name>YIDC_PSEAB</name>